<feature type="chain" id="PRO_0000074107" description="Soluble guanylate cyclase 89Db">
    <location>
        <begin position="1"/>
        <end position="669"/>
    </location>
</feature>
<feature type="domain" description="Guanylate cyclase" evidence="4">
    <location>
        <begin position="494"/>
        <end position="620"/>
    </location>
</feature>
<feature type="coiled-coil region" evidence="3">
    <location>
        <begin position="430"/>
        <end position="458"/>
    </location>
</feature>
<feature type="binding site" description="proximal binding residue" evidence="2">
    <location>
        <position position="104"/>
    </location>
    <ligand>
        <name>heme</name>
        <dbReference type="ChEBI" id="CHEBI:30413"/>
    </ligand>
    <ligandPart>
        <name>Fe</name>
        <dbReference type="ChEBI" id="CHEBI:18248"/>
    </ligandPart>
</feature>
<reference evidence="12" key="1">
    <citation type="journal article" date="2000" name="Science">
        <title>The genome sequence of Drosophila melanogaster.</title>
        <authorList>
            <person name="Adams M.D."/>
            <person name="Celniker S.E."/>
            <person name="Holt R.A."/>
            <person name="Evans C.A."/>
            <person name="Gocayne J.D."/>
            <person name="Amanatides P.G."/>
            <person name="Scherer S.E."/>
            <person name="Li P.W."/>
            <person name="Hoskins R.A."/>
            <person name="Galle R.F."/>
            <person name="George R.A."/>
            <person name="Lewis S.E."/>
            <person name="Richards S."/>
            <person name="Ashburner M."/>
            <person name="Henderson S.N."/>
            <person name="Sutton G.G."/>
            <person name="Wortman J.R."/>
            <person name="Yandell M.D."/>
            <person name="Zhang Q."/>
            <person name="Chen L.X."/>
            <person name="Brandon R.C."/>
            <person name="Rogers Y.-H.C."/>
            <person name="Blazej R.G."/>
            <person name="Champe M."/>
            <person name="Pfeiffer B.D."/>
            <person name="Wan K.H."/>
            <person name="Doyle C."/>
            <person name="Baxter E.G."/>
            <person name="Helt G."/>
            <person name="Nelson C.R."/>
            <person name="Miklos G.L.G."/>
            <person name="Abril J.F."/>
            <person name="Agbayani A."/>
            <person name="An H.-J."/>
            <person name="Andrews-Pfannkoch C."/>
            <person name="Baldwin D."/>
            <person name="Ballew R.M."/>
            <person name="Basu A."/>
            <person name="Baxendale J."/>
            <person name="Bayraktaroglu L."/>
            <person name="Beasley E.M."/>
            <person name="Beeson K.Y."/>
            <person name="Benos P.V."/>
            <person name="Berman B.P."/>
            <person name="Bhandari D."/>
            <person name="Bolshakov S."/>
            <person name="Borkova D."/>
            <person name="Botchan M.R."/>
            <person name="Bouck J."/>
            <person name="Brokstein P."/>
            <person name="Brottier P."/>
            <person name="Burtis K.C."/>
            <person name="Busam D.A."/>
            <person name="Butler H."/>
            <person name="Cadieu E."/>
            <person name="Center A."/>
            <person name="Chandra I."/>
            <person name="Cherry J.M."/>
            <person name="Cawley S."/>
            <person name="Dahlke C."/>
            <person name="Davenport L.B."/>
            <person name="Davies P."/>
            <person name="de Pablos B."/>
            <person name="Delcher A."/>
            <person name="Deng Z."/>
            <person name="Mays A.D."/>
            <person name="Dew I."/>
            <person name="Dietz S.M."/>
            <person name="Dodson K."/>
            <person name="Doup L.E."/>
            <person name="Downes M."/>
            <person name="Dugan-Rocha S."/>
            <person name="Dunkov B.C."/>
            <person name="Dunn P."/>
            <person name="Durbin K.J."/>
            <person name="Evangelista C.C."/>
            <person name="Ferraz C."/>
            <person name="Ferriera S."/>
            <person name="Fleischmann W."/>
            <person name="Fosler C."/>
            <person name="Gabrielian A.E."/>
            <person name="Garg N.S."/>
            <person name="Gelbart W.M."/>
            <person name="Glasser K."/>
            <person name="Glodek A."/>
            <person name="Gong F."/>
            <person name="Gorrell J.H."/>
            <person name="Gu Z."/>
            <person name="Guan P."/>
            <person name="Harris M."/>
            <person name="Harris N.L."/>
            <person name="Harvey D.A."/>
            <person name="Heiman T.J."/>
            <person name="Hernandez J.R."/>
            <person name="Houck J."/>
            <person name="Hostin D."/>
            <person name="Houston K.A."/>
            <person name="Howland T.J."/>
            <person name="Wei M.-H."/>
            <person name="Ibegwam C."/>
            <person name="Jalali M."/>
            <person name="Kalush F."/>
            <person name="Karpen G.H."/>
            <person name="Ke Z."/>
            <person name="Kennison J.A."/>
            <person name="Ketchum K.A."/>
            <person name="Kimmel B.E."/>
            <person name="Kodira C.D."/>
            <person name="Kraft C.L."/>
            <person name="Kravitz S."/>
            <person name="Kulp D."/>
            <person name="Lai Z."/>
            <person name="Lasko P."/>
            <person name="Lei Y."/>
            <person name="Levitsky A.A."/>
            <person name="Li J.H."/>
            <person name="Li Z."/>
            <person name="Liang Y."/>
            <person name="Lin X."/>
            <person name="Liu X."/>
            <person name="Mattei B."/>
            <person name="McIntosh T.C."/>
            <person name="McLeod M.P."/>
            <person name="McPherson D."/>
            <person name="Merkulov G."/>
            <person name="Milshina N.V."/>
            <person name="Mobarry C."/>
            <person name="Morris J."/>
            <person name="Moshrefi A."/>
            <person name="Mount S.M."/>
            <person name="Moy M."/>
            <person name="Murphy B."/>
            <person name="Murphy L."/>
            <person name="Muzny D.M."/>
            <person name="Nelson D.L."/>
            <person name="Nelson D.R."/>
            <person name="Nelson K.A."/>
            <person name="Nixon K."/>
            <person name="Nusskern D.R."/>
            <person name="Pacleb J.M."/>
            <person name="Palazzolo M."/>
            <person name="Pittman G.S."/>
            <person name="Pan S."/>
            <person name="Pollard J."/>
            <person name="Puri V."/>
            <person name="Reese M.G."/>
            <person name="Reinert K."/>
            <person name="Remington K."/>
            <person name="Saunders R.D.C."/>
            <person name="Scheeler F."/>
            <person name="Shen H."/>
            <person name="Shue B.C."/>
            <person name="Siden-Kiamos I."/>
            <person name="Simpson M."/>
            <person name="Skupski M.P."/>
            <person name="Smith T.J."/>
            <person name="Spier E."/>
            <person name="Spradling A.C."/>
            <person name="Stapleton M."/>
            <person name="Strong R."/>
            <person name="Sun E."/>
            <person name="Svirskas R."/>
            <person name="Tector C."/>
            <person name="Turner R."/>
            <person name="Venter E."/>
            <person name="Wang A.H."/>
            <person name="Wang X."/>
            <person name="Wang Z.-Y."/>
            <person name="Wassarman D.A."/>
            <person name="Weinstock G.M."/>
            <person name="Weissenbach J."/>
            <person name="Williams S.M."/>
            <person name="Woodage T."/>
            <person name="Worley K.C."/>
            <person name="Wu D."/>
            <person name="Yang S."/>
            <person name="Yao Q.A."/>
            <person name="Ye J."/>
            <person name="Yeh R.-F."/>
            <person name="Zaveri J.S."/>
            <person name="Zhan M."/>
            <person name="Zhang G."/>
            <person name="Zhao Q."/>
            <person name="Zheng L."/>
            <person name="Zheng X.H."/>
            <person name="Zhong F.N."/>
            <person name="Zhong W."/>
            <person name="Zhou X."/>
            <person name="Zhu S.C."/>
            <person name="Zhu X."/>
            <person name="Smith H.O."/>
            <person name="Gibbs R.A."/>
            <person name="Myers E.W."/>
            <person name="Rubin G.M."/>
            <person name="Venter J.C."/>
        </authorList>
    </citation>
    <scope>NUCLEOTIDE SEQUENCE [LARGE SCALE GENOMIC DNA]</scope>
    <source>
        <strain evidence="5">Berkeley</strain>
    </source>
</reference>
<reference evidence="11 12" key="2">
    <citation type="journal article" date="2002" name="Genome Biol.">
        <title>Annotation of the Drosophila melanogaster euchromatic genome: a systematic review.</title>
        <authorList>
            <person name="Misra S."/>
            <person name="Crosby M.A."/>
            <person name="Mungall C.J."/>
            <person name="Matthews B.B."/>
            <person name="Campbell K.S."/>
            <person name="Hradecky P."/>
            <person name="Huang Y."/>
            <person name="Kaminker J.S."/>
            <person name="Millburn G.H."/>
            <person name="Prochnik S.E."/>
            <person name="Smith C.D."/>
            <person name="Tupy J.L."/>
            <person name="Whitfield E.J."/>
            <person name="Bayraktaroglu L."/>
            <person name="Berman B.P."/>
            <person name="Bettencourt B.R."/>
            <person name="Celniker S.E."/>
            <person name="de Grey A.D.N.J."/>
            <person name="Drysdale R.A."/>
            <person name="Harris N.L."/>
            <person name="Richter J."/>
            <person name="Russo S."/>
            <person name="Schroeder A.J."/>
            <person name="Shu S.Q."/>
            <person name="Stapleton M."/>
            <person name="Yamada C."/>
            <person name="Ashburner M."/>
            <person name="Gelbart W.M."/>
            <person name="Rubin G.M."/>
            <person name="Lewis S.E."/>
        </authorList>
    </citation>
    <scope>GENOME REANNOTATION</scope>
    <source>
        <strain>Berkeley</strain>
    </source>
</reference>
<reference evidence="11 13" key="3">
    <citation type="journal article" date="2002" name="Genome Biol.">
        <title>A Drosophila full-length cDNA resource.</title>
        <authorList>
            <person name="Stapleton M."/>
            <person name="Carlson J.W."/>
            <person name="Brokstein P."/>
            <person name="Yu C."/>
            <person name="Champe M."/>
            <person name="George R.A."/>
            <person name="Guarin H."/>
            <person name="Kronmiller B."/>
            <person name="Pacleb J.M."/>
            <person name="Park S."/>
            <person name="Wan K.H."/>
            <person name="Rubin G.M."/>
            <person name="Celniker S.E."/>
        </authorList>
    </citation>
    <scope>NUCLEOTIDE SEQUENCE [LARGE SCALE MRNA]</scope>
    <source>
        <strain evidence="13">Berkeley</strain>
        <tissue evidence="6">Head</tissue>
    </source>
</reference>
<reference evidence="11" key="4">
    <citation type="journal article" date="2004" name="J. Biol. Chem.">
        <title>Atypical soluble guanylyl cyclases in Drosophila can function as molecular oxygen sensors.</title>
        <authorList>
            <person name="Morton D.B."/>
        </authorList>
    </citation>
    <scope>FUNCTION</scope>
    <scope>INTERACTION WITH GYC88E</scope>
</reference>
<reference evidence="11" key="5">
    <citation type="journal article" date="2004" name="J. Exp. Biol.">
        <title>Preliminary characterization of two atypical soluble guanylyl cyclases in the central and peripheral nervous system of Drosophila melanogaster.</title>
        <authorList>
            <person name="Langlais K.K."/>
            <person name="Stewart J.A."/>
            <person name="Morton D.B."/>
        </authorList>
    </citation>
    <scope>ACTIVITY REGULATION</scope>
    <scope>INTERACTION WITH GYC88E</scope>
    <scope>TISSUE SPECIFICITY</scope>
</reference>
<evidence type="ECO:0000250" key="1"/>
<evidence type="ECO:0000250" key="2">
    <source>
        <dbReference type="UniProtKB" id="P16068"/>
    </source>
</evidence>
<evidence type="ECO:0000255" key="3"/>
<evidence type="ECO:0000255" key="4">
    <source>
        <dbReference type="PROSITE-ProRule" id="PRU00099"/>
    </source>
</evidence>
<evidence type="ECO:0000269" key="5">
    <source>
    </source>
</evidence>
<evidence type="ECO:0000269" key="6">
    <source>
    </source>
</evidence>
<evidence type="ECO:0000269" key="7">
    <source>
    </source>
</evidence>
<evidence type="ECO:0000269" key="8">
    <source>
    </source>
</evidence>
<evidence type="ECO:0000303" key="9">
    <source>
    </source>
</evidence>
<evidence type="ECO:0000303" key="10">
    <source>
    </source>
</evidence>
<evidence type="ECO:0000305" key="11"/>
<evidence type="ECO:0000312" key="12">
    <source>
        <dbReference type="EMBL" id="AAF55323.1"/>
    </source>
</evidence>
<evidence type="ECO:0000312" key="13">
    <source>
        <dbReference type="EMBL" id="AAK92845.1"/>
    </source>
</evidence>
<evidence type="ECO:0000312" key="14">
    <source>
        <dbReference type="FlyBase" id="FBgn0038436"/>
    </source>
</evidence>
<comment type="function">
    <text evidence="8">Heterodimers with Gyc88E are activated in response to changing oxygen concentrations, alerting flies to hypoxic environments. Under normal oxygen concentrations, oxygen binds to the heme group and results in low levels of guanylyl cyclase activity. When exposed to reduced oxygen concentrations, the oxygen dissociates from the heme group resulting in activation of the enzyme.</text>
</comment>
<comment type="catalytic activity">
    <reaction evidence="9">
        <text>GTP = 3',5'-cyclic GMP + diphosphate</text>
        <dbReference type="Rhea" id="RHEA:13665"/>
        <dbReference type="ChEBI" id="CHEBI:33019"/>
        <dbReference type="ChEBI" id="CHEBI:37565"/>
        <dbReference type="ChEBI" id="CHEBI:57746"/>
        <dbReference type="EC" id="4.6.1.2"/>
    </reaction>
</comment>
<comment type="cofactor">
    <cofactor evidence="1">
        <name>heme</name>
        <dbReference type="ChEBI" id="CHEBI:30413"/>
    </cofactor>
    <text evidence="1">Binds 1 or 2 heme groups per heterodimer.</text>
</comment>
<comment type="activity regulation">
    <text evidence="7">Probably not activated by nitric oxide (NO). Heterodimer exhibits some stimulation, compounds (SIN-1 and two of the NONOates) that were ineffective at stimulating Gyc-88E homodimer did stimulate the heterodimer.</text>
</comment>
<comment type="subunit">
    <text evidence="7 8">Heterodimer; with Gyc88E, in the presence of magnesium or manganese.</text>
</comment>
<comment type="subcellular location">
    <subcellularLocation>
        <location evidence="1">Cytoplasm</location>
    </subcellularLocation>
</comment>
<comment type="tissue specificity">
    <text evidence="7">Expressed in embryos in a segmental pattern in the ventral nerve cord (VNC) and in the brain, beginning at stage 13 and continuing through to stage 17. Colocalized with Gyc-89Db in several peripheral neurons that innervate trachea, basiconical sensilla and the sensory cones in the posterior segments of the embryo. Expression in wandering 3rd instar larvae is most prominent in a small cluster of cells located in the anterior medial region of each brain lobe. In the VNC, expression is found in scattered cells both laterally and at the midline.</text>
</comment>
<comment type="miscellaneous">
    <text evidence="11">There are two types of guanylate cyclases: soluble forms and membrane-associated receptor forms.</text>
</comment>
<comment type="similarity">
    <text evidence="4">Belongs to the adenylyl cyclase class-4/guanylyl cyclase family.</text>
</comment>
<accession>Q9VEU5</accession>
<sequence length="669" mass="75882">MYGMLYESVQHYIQQEYGMETWRKVCQIVDCKHQSFKTHQIYPDKLMPDFAAALSASTGESFDFCMNFFGRCFVRFFSNFGYDKMIRSTGRYFCDFLQSIDNIHVQMRFTYPKMKSPSMQLTNMDDDGAVILYRSGRTGMSKYLIGQMTEVAKEFYGLDMTAYVLESQNDICGGTAGPIKLTEGPLTVIVKYRLDFDNRDYMAKRVNVIAHPSQLKMPSVDLNVFLELFPFTIVLDHDMKITLAGEKIVETWILHNPGVNPKTFIGSHILERFKCRRPKDTQIQWETILQMRTVLFEFELIRTGHNRAAYDAALNFDFENFDEASSLNEAQAMALASAKEFSAENAKEEAAAAATSKDEIDPATGQRRHSVGLRSILLKGQMFYIKDVDSLIFLCSPLIENLDELHGIGLYLNDLNPHGLSRELVMAGWQHCSKLEIMFEKEEQRSDELEKSLELADSWKRQGDELLYSMIPRPIAERMRKSEEHVCQSFEEVSVIFIEVMNIYDSGSNNIQDAMQAVTTLNKVFSALDEEIISPFVYKVETVGMVYMAVSGAPDVNPLHAEHACDLALRVMKKVKAHALPGVAIRVGINSGPVVAGVVGMKVPRYCLFGDTVNTASRMESSSDPWMIQLSNYTALKVQKVGYKVEARGFVKVKGKGEMETYWLLEGPE</sequence>
<keyword id="KW-0141">cGMP biosynthesis</keyword>
<keyword id="KW-0175">Coiled coil</keyword>
<keyword id="KW-0963">Cytoplasm</keyword>
<keyword id="KW-0342">GTP-binding</keyword>
<keyword id="KW-0349">Heme</keyword>
<keyword id="KW-0408">Iron</keyword>
<keyword id="KW-0456">Lyase</keyword>
<keyword id="KW-0460">Magnesium</keyword>
<keyword id="KW-0464">Manganese</keyword>
<keyword id="KW-0479">Metal-binding</keyword>
<keyword id="KW-0547">Nucleotide-binding</keyword>
<keyword id="KW-1185">Reference proteome</keyword>
<proteinExistence type="evidence at protein level"/>
<dbReference type="EC" id="4.6.1.2"/>
<dbReference type="EMBL" id="AE014297">
    <property type="protein sequence ID" value="AAF55323.1"/>
    <property type="molecule type" value="Genomic_DNA"/>
</dbReference>
<dbReference type="EMBL" id="AY051421">
    <property type="protein sequence ID" value="AAK92845.1"/>
    <property type="molecule type" value="mRNA"/>
</dbReference>
<dbReference type="RefSeq" id="NP_650551.1">
    <property type="nucleotide sequence ID" value="NM_142294.4"/>
</dbReference>
<dbReference type="SMR" id="Q9VEU5"/>
<dbReference type="BioGRID" id="67047">
    <property type="interactions" value="9"/>
</dbReference>
<dbReference type="FunCoup" id="Q9VEU5">
    <property type="interactions" value="91"/>
</dbReference>
<dbReference type="IntAct" id="Q9VEU5">
    <property type="interactions" value="1"/>
</dbReference>
<dbReference type="STRING" id="7227.FBpp0082745"/>
<dbReference type="PaxDb" id="7227-FBpp0082745"/>
<dbReference type="DNASU" id="42002"/>
<dbReference type="EnsemblMetazoa" id="FBtr0083294">
    <property type="protein sequence ID" value="FBpp0082745"/>
    <property type="gene ID" value="FBgn0038436"/>
</dbReference>
<dbReference type="GeneID" id="42002"/>
<dbReference type="KEGG" id="dme:Dmel_CG14886"/>
<dbReference type="AGR" id="FB:FBgn0038436"/>
<dbReference type="CTD" id="42002"/>
<dbReference type="FlyBase" id="FBgn0038436">
    <property type="gene designation" value="Gyc89Db"/>
</dbReference>
<dbReference type="VEuPathDB" id="VectorBase:FBgn0038436"/>
<dbReference type="eggNOG" id="KOG4171">
    <property type="taxonomic scope" value="Eukaryota"/>
</dbReference>
<dbReference type="GeneTree" id="ENSGT00940000165461"/>
<dbReference type="HOGENOM" id="CLU_011614_4_1_1"/>
<dbReference type="InParanoid" id="Q9VEU5"/>
<dbReference type="OMA" id="VQHYIQE"/>
<dbReference type="OrthoDB" id="60033at2759"/>
<dbReference type="PhylomeDB" id="Q9VEU5"/>
<dbReference type="BRENDA" id="4.6.1.2">
    <property type="organism ID" value="1994"/>
</dbReference>
<dbReference type="BioGRID-ORCS" id="42002">
    <property type="hits" value="0 hits in 1 CRISPR screen"/>
</dbReference>
<dbReference type="GenomeRNAi" id="42002"/>
<dbReference type="PRO" id="PR:Q9VEU5"/>
<dbReference type="Proteomes" id="UP000000803">
    <property type="component" value="Chromosome 3R"/>
</dbReference>
<dbReference type="Bgee" id="FBgn0038436">
    <property type="expression patterns" value="Expressed in adult capability neuron in brain and 12 other cell types or tissues"/>
</dbReference>
<dbReference type="GO" id="GO:0008074">
    <property type="term" value="C:guanylate cyclase complex, soluble"/>
    <property type="evidence" value="ECO:0000314"/>
    <property type="project" value="FlyBase"/>
</dbReference>
<dbReference type="GO" id="GO:0019899">
    <property type="term" value="F:enzyme binding"/>
    <property type="evidence" value="ECO:0000353"/>
    <property type="project" value="UniProtKB"/>
</dbReference>
<dbReference type="GO" id="GO:0005525">
    <property type="term" value="F:GTP binding"/>
    <property type="evidence" value="ECO:0007669"/>
    <property type="project" value="UniProtKB-KW"/>
</dbReference>
<dbReference type="GO" id="GO:0004383">
    <property type="term" value="F:guanylate cyclase activity"/>
    <property type="evidence" value="ECO:0000314"/>
    <property type="project" value="UniProtKB"/>
</dbReference>
<dbReference type="GO" id="GO:0020037">
    <property type="term" value="F:heme binding"/>
    <property type="evidence" value="ECO:0007669"/>
    <property type="project" value="InterPro"/>
</dbReference>
<dbReference type="GO" id="GO:0046872">
    <property type="term" value="F:metal ion binding"/>
    <property type="evidence" value="ECO:0007669"/>
    <property type="project" value="UniProtKB-KW"/>
</dbReference>
<dbReference type="GO" id="GO:0046982">
    <property type="term" value="F:protein heterodimerization activity"/>
    <property type="evidence" value="ECO:0000353"/>
    <property type="project" value="UniProtKB"/>
</dbReference>
<dbReference type="GO" id="GO:0019934">
    <property type="term" value="P:cGMP-mediated signaling"/>
    <property type="evidence" value="ECO:0000314"/>
    <property type="project" value="UniProtKB"/>
</dbReference>
<dbReference type="GO" id="GO:0038060">
    <property type="term" value="P:nitric oxide-cGMP-mediated signaling"/>
    <property type="evidence" value="ECO:0000314"/>
    <property type="project" value="UniProtKB"/>
</dbReference>
<dbReference type="GO" id="GO:0055093">
    <property type="term" value="P:response to hyperoxia"/>
    <property type="evidence" value="ECO:0000315"/>
    <property type="project" value="FlyBase"/>
</dbReference>
<dbReference type="GO" id="GO:0001666">
    <property type="term" value="P:response to hypoxia"/>
    <property type="evidence" value="ECO:0000315"/>
    <property type="project" value="FlyBase"/>
</dbReference>
<dbReference type="GO" id="GO:0070482">
    <property type="term" value="P:response to oxygen levels"/>
    <property type="evidence" value="ECO:0000318"/>
    <property type="project" value="GO_Central"/>
</dbReference>
<dbReference type="GO" id="GO:0000302">
    <property type="term" value="P:response to reactive oxygen species"/>
    <property type="evidence" value="ECO:0000314"/>
    <property type="project" value="UniProtKB"/>
</dbReference>
<dbReference type="CDD" id="cd07302">
    <property type="entry name" value="CHD"/>
    <property type="match status" value="1"/>
</dbReference>
<dbReference type="FunFam" id="3.30.70.1230:FF:000038">
    <property type="entry name" value="soluble guanylate cyclase 89Da"/>
    <property type="match status" value="1"/>
</dbReference>
<dbReference type="FunFam" id="3.90.1520.10:FF:000004">
    <property type="entry name" value="soluble guanylate cyclase 89Da"/>
    <property type="match status" value="1"/>
</dbReference>
<dbReference type="Gene3D" id="6.10.250.780">
    <property type="match status" value="1"/>
</dbReference>
<dbReference type="Gene3D" id="3.90.1520.10">
    <property type="entry name" value="H-NOX domain"/>
    <property type="match status" value="1"/>
</dbReference>
<dbReference type="Gene3D" id="3.30.450.260">
    <property type="entry name" value="Haem NO binding associated domain"/>
    <property type="match status" value="1"/>
</dbReference>
<dbReference type="Gene3D" id="3.30.70.1230">
    <property type="entry name" value="Nucleotide cyclase"/>
    <property type="match status" value="1"/>
</dbReference>
<dbReference type="InterPro" id="IPR001054">
    <property type="entry name" value="A/G_cyclase"/>
</dbReference>
<dbReference type="InterPro" id="IPR018297">
    <property type="entry name" value="A/G_cyclase_CS"/>
</dbReference>
<dbReference type="InterPro" id="IPR038158">
    <property type="entry name" value="H-NOX_domain_sf"/>
</dbReference>
<dbReference type="InterPro" id="IPR011644">
    <property type="entry name" value="Heme_NO-bd"/>
</dbReference>
<dbReference type="InterPro" id="IPR011645">
    <property type="entry name" value="HNOB_dom_associated"/>
</dbReference>
<dbReference type="InterPro" id="IPR042463">
    <property type="entry name" value="HNOB_dom_associated_sf"/>
</dbReference>
<dbReference type="InterPro" id="IPR024096">
    <property type="entry name" value="NO_sig/Golgi_transp_ligand-bd"/>
</dbReference>
<dbReference type="InterPro" id="IPR029787">
    <property type="entry name" value="Nucleotide_cyclase"/>
</dbReference>
<dbReference type="PANTHER" id="PTHR45655">
    <property type="entry name" value="GUANYLATE CYCLASE SOLUBLE SUBUNIT BETA-2"/>
    <property type="match status" value="1"/>
</dbReference>
<dbReference type="PANTHER" id="PTHR45655:SF5">
    <property type="entry name" value="SOLUBLE GUANYLATE CYCLASE 89DA-RELATED"/>
    <property type="match status" value="1"/>
</dbReference>
<dbReference type="Pfam" id="PF00211">
    <property type="entry name" value="Guanylate_cyc"/>
    <property type="match status" value="1"/>
</dbReference>
<dbReference type="Pfam" id="PF07700">
    <property type="entry name" value="HNOB"/>
    <property type="match status" value="1"/>
</dbReference>
<dbReference type="Pfam" id="PF07701">
    <property type="entry name" value="HNOBA"/>
    <property type="match status" value="1"/>
</dbReference>
<dbReference type="SMART" id="SM00044">
    <property type="entry name" value="CYCc"/>
    <property type="match status" value="1"/>
</dbReference>
<dbReference type="SUPFAM" id="SSF111126">
    <property type="entry name" value="Ligand-binding domain in the NO signalling and Golgi transport"/>
    <property type="match status" value="1"/>
</dbReference>
<dbReference type="SUPFAM" id="SSF55073">
    <property type="entry name" value="Nucleotide cyclase"/>
    <property type="match status" value="1"/>
</dbReference>
<dbReference type="PROSITE" id="PS00452">
    <property type="entry name" value="GUANYLATE_CYCLASE_1"/>
    <property type="match status" value="1"/>
</dbReference>
<dbReference type="PROSITE" id="PS50125">
    <property type="entry name" value="GUANYLATE_CYCLASE_2"/>
    <property type="match status" value="1"/>
</dbReference>
<gene>
    <name evidence="14" type="primary">Gyc89Db</name>
    <name evidence="10" type="synonym">Gyc-89Db</name>
    <name evidence="14" type="ORF">CG14886</name>
</gene>
<name>GCYDB_DROME</name>
<protein>
    <recommendedName>
        <fullName evidence="10">Soluble guanylate cyclase 89Db</fullName>
        <ecNumber>4.6.1.2</ecNumber>
    </recommendedName>
</protein>
<organism>
    <name type="scientific">Drosophila melanogaster</name>
    <name type="common">Fruit fly</name>
    <dbReference type="NCBI Taxonomy" id="7227"/>
    <lineage>
        <taxon>Eukaryota</taxon>
        <taxon>Metazoa</taxon>
        <taxon>Ecdysozoa</taxon>
        <taxon>Arthropoda</taxon>
        <taxon>Hexapoda</taxon>
        <taxon>Insecta</taxon>
        <taxon>Pterygota</taxon>
        <taxon>Neoptera</taxon>
        <taxon>Endopterygota</taxon>
        <taxon>Diptera</taxon>
        <taxon>Brachycera</taxon>
        <taxon>Muscomorpha</taxon>
        <taxon>Ephydroidea</taxon>
        <taxon>Drosophilidae</taxon>
        <taxon>Drosophila</taxon>
        <taxon>Sophophora</taxon>
    </lineage>
</organism>